<evidence type="ECO:0000250" key="1"/>
<evidence type="ECO:0000255" key="2">
    <source>
        <dbReference type="HAMAP-Rule" id="MF_01303"/>
    </source>
</evidence>
<accession>P58870</accession>
<protein>
    <recommendedName>
        <fullName evidence="2">Photosystem I iron-sulfur center</fullName>
        <ecNumber evidence="2">1.97.1.12</ecNumber>
    </recommendedName>
    <alternativeName>
        <fullName evidence="2">9 kDa polypeptide</fullName>
    </alternativeName>
    <alternativeName>
        <fullName evidence="2">PSI-C</fullName>
    </alternativeName>
    <alternativeName>
        <fullName evidence="2">Photosystem I subunit VII</fullName>
    </alternativeName>
    <alternativeName>
        <fullName evidence="2">PsaC</fullName>
    </alternativeName>
</protein>
<feature type="initiator methionine" description="Removed" evidence="1">
    <location>
        <position position="1"/>
    </location>
</feature>
<feature type="chain" id="PRO_0000062001" description="Photosystem I iron-sulfur center">
    <location>
        <begin position="2"/>
        <end position="81"/>
    </location>
</feature>
<feature type="domain" description="4Fe-4S ferredoxin-type 1" evidence="2">
    <location>
        <begin position="2"/>
        <end position="31"/>
    </location>
</feature>
<feature type="domain" description="4Fe-4S ferredoxin-type 2" evidence="2">
    <location>
        <begin position="39"/>
        <end position="68"/>
    </location>
</feature>
<feature type="binding site" evidence="2">
    <location>
        <position position="11"/>
    </location>
    <ligand>
        <name>[4Fe-4S] cluster</name>
        <dbReference type="ChEBI" id="CHEBI:49883"/>
        <label>1</label>
    </ligand>
</feature>
<feature type="binding site" evidence="2">
    <location>
        <position position="14"/>
    </location>
    <ligand>
        <name>[4Fe-4S] cluster</name>
        <dbReference type="ChEBI" id="CHEBI:49883"/>
        <label>1</label>
    </ligand>
</feature>
<feature type="binding site" evidence="2">
    <location>
        <position position="17"/>
    </location>
    <ligand>
        <name>[4Fe-4S] cluster</name>
        <dbReference type="ChEBI" id="CHEBI:49883"/>
        <label>1</label>
    </ligand>
</feature>
<feature type="binding site" evidence="2">
    <location>
        <position position="21"/>
    </location>
    <ligand>
        <name>[4Fe-4S] cluster</name>
        <dbReference type="ChEBI" id="CHEBI:49883"/>
        <label>2</label>
    </ligand>
</feature>
<feature type="binding site" evidence="2">
    <location>
        <position position="48"/>
    </location>
    <ligand>
        <name>[4Fe-4S] cluster</name>
        <dbReference type="ChEBI" id="CHEBI:49883"/>
        <label>2</label>
    </ligand>
</feature>
<feature type="binding site" evidence="2">
    <location>
        <position position="51"/>
    </location>
    <ligand>
        <name>[4Fe-4S] cluster</name>
        <dbReference type="ChEBI" id="CHEBI:49883"/>
        <label>2</label>
    </ligand>
</feature>
<feature type="binding site" evidence="2">
    <location>
        <position position="54"/>
    </location>
    <ligand>
        <name>[4Fe-4S] cluster</name>
        <dbReference type="ChEBI" id="CHEBI:49883"/>
        <label>2</label>
    </ligand>
</feature>
<feature type="binding site" evidence="2">
    <location>
        <position position="58"/>
    </location>
    <ligand>
        <name>[4Fe-4S] cluster</name>
        <dbReference type="ChEBI" id="CHEBI:49883"/>
        <label>1</label>
    </ligand>
</feature>
<dbReference type="EC" id="1.97.1.12" evidence="2"/>
<dbReference type="EMBL" id="AP004638">
    <property type="protein sequence ID" value="BAB84275.1"/>
    <property type="molecule type" value="Genomic_DNA"/>
</dbReference>
<dbReference type="RefSeq" id="NP_569686.1">
    <property type="nucleotide sequence ID" value="NC_003386.1"/>
</dbReference>
<dbReference type="SMR" id="P58870"/>
<dbReference type="GeneID" id="2545135"/>
<dbReference type="GO" id="GO:0009535">
    <property type="term" value="C:chloroplast thylakoid membrane"/>
    <property type="evidence" value="ECO:0007669"/>
    <property type="project" value="UniProtKB-SubCell"/>
</dbReference>
<dbReference type="GO" id="GO:0009522">
    <property type="term" value="C:photosystem I"/>
    <property type="evidence" value="ECO:0007669"/>
    <property type="project" value="UniProtKB-KW"/>
</dbReference>
<dbReference type="GO" id="GO:0051539">
    <property type="term" value="F:4 iron, 4 sulfur cluster binding"/>
    <property type="evidence" value="ECO:0007669"/>
    <property type="project" value="UniProtKB-KW"/>
</dbReference>
<dbReference type="GO" id="GO:0009055">
    <property type="term" value="F:electron transfer activity"/>
    <property type="evidence" value="ECO:0007669"/>
    <property type="project" value="UniProtKB-UniRule"/>
</dbReference>
<dbReference type="GO" id="GO:0046872">
    <property type="term" value="F:metal ion binding"/>
    <property type="evidence" value="ECO:0007669"/>
    <property type="project" value="UniProtKB-KW"/>
</dbReference>
<dbReference type="GO" id="GO:0016491">
    <property type="term" value="F:oxidoreductase activity"/>
    <property type="evidence" value="ECO:0007669"/>
    <property type="project" value="UniProtKB-KW"/>
</dbReference>
<dbReference type="GO" id="GO:0009773">
    <property type="term" value="P:photosynthetic electron transport in photosystem I"/>
    <property type="evidence" value="ECO:0007669"/>
    <property type="project" value="InterPro"/>
</dbReference>
<dbReference type="FunFam" id="3.30.70.20:FF:000001">
    <property type="entry name" value="Photosystem I iron-sulfur center"/>
    <property type="match status" value="1"/>
</dbReference>
<dbReference type="Gene3D" id="3.30.70.20">
    <property type="match status" value="1"/>
</dbReference>
<dbReference type="HAMAP" id="MF_01303">
    <property type="entry name" value="PSI_PsaC"/>
    <property type="match status" value="1"/>
</dbReference>
<dbReference type="InterPro" id="IPR017896">
    <property type="entry name" value="4Fe4S_Fe-S-bd"/>
</dbReference>
<dbReference type="InterPro" id="IPR017900">
    <property type="entry name" value="4Fe4S_Fe_S_CS"/>
</dbReference>
<dbReference type="InterPro" id="IPR050157">
    <property type="entry name" value="PSI_iron-sulfur_center"/>
</dbReference>
<dbReference type="InterPro" id="IPR017491">
    <property type="entry name" value="PSI_PsaC"/>
</dbReference>
<dbReference type="NCBIfam" id="TIGR03048">
    <property type="entry name" value="PS_I_psaC"/>
    <property type="match status" value="1"/>
</dbReference>
<dbReference type="PANTHER" id="PTHR24960:SF79">
    <property type="entry name" value="PHOTOSYSTEM I IRON-SULFUR CENTER"/>
    <property type="match status" value="1"/>
</dbReference>
<dbReference type="PANTHER" id="PTHR24960">
    <property type="entry name" value="PHOTOSYSTEM I IRON-SULFUR CENTER-RELATED"/>
    <property type="match status" value="1"/>
</dbReference>
<dbReference type="Pfam" id="PF14697">
    <property type="entry name" value="Fer4_21"/>
    <property type="match status" value="1"/>
</dbReference>
<dbReference type="SUPFAM" id="SSF54862">
    <property type="entry name" value="4Fe-4S ferredoxins"/>
    <property type="match status" value="1"/>
</dbReference>
<dbReference type="PROSITE" id="PS00198">
    <property type="entry name" value="4FE4S_FER_1"/>
    <property type="match status" value="2"/>
</dbReference>
<dbReference type="PROSITE" id="PS51379">
    <property type="entry name" value="4FE4S_FER_2"/>
    <property type="match status" value="2"/>
</dbReference>
<comment type="function">
    <text evidence="2">Apoprotein for the two 4Fe-4S centers FA and FB of photosystem I (PSI); essential for photochemical activity. FB is the terminal electron acceptor of PSI, donating electrons to ferredoxin. The C-terminus interacts with PsaA/B/D and helps assemble the protein into the PSI complex. Required for binding of PsaD and PsaE to PSI. PSI is a plastocyanin-ferredoxin oxidoreductase, converting photonic excitation into a charge separation, which transfers an electron from the donor P700 chlorophyll pair to the spectroscopically characterized acceptors A0, A1, FX, FA and FB in turn.</text>
</comment>
<comment type="catalytic activity">
    <reaction evidence="2">
        <text>reduced [plastocyanin] + hnu + oxidized [2Fe-2S]-[ferredoxin] = oxidized [plastocyanin] + reduced [2Fe-2S]-[ferredoxin]</text>
        <dbReference type="Rhea" id="RHEA:30407"/>
        <dbReference type="Rhea" id="RHEA-COMP:10000"/>
        <dbReference type="Rhea" id="RHEA-COMP:10001"/>
        <dbReference type="Rhea" id="RHEA-COMP:10039"/>
        <dbReference type="Rhea" id="RHEA-COMP:10040"/>
        <dbReference type="ChEBI" id="CHEBI:29036"/>
        <dbReference type="ChEBI" id="CHEBI:30212"/>
        <dbReference type="ChEBI" id="CHEBI:33737"/>
        <dbReference type="ChEBI" id="CHEBI:33738"/>
        <dbReference type="ChEBI" id="CHEBI:49552"/>
        <dbReference type="EC" id="1.97.1.12"/>
    </reaction>
</comment>
<comment type="cofactor">
    <cofactor evidence="2">
        <name>[4Fe-4S] cluster</name>
        <dbReference type="ChEBI" id="CHEBI:49883"/>
    </cofactor>
    <text evidence="2">Binds 2 [4Fe-4S] clusters. Cluster 2 is most probably the spectroscopically characterized electron acceptor FA and cluster 1 is most probably FB.</text>
</comment>
<comment type="subunit">
    <text evidence="2">The eukaryotic PSI reaction center is composed of at least 11 subunits.</text>
</comment>
<comment type="subcellular location">
    <subcellularLocation>
        <location evidence="2">Plastid</location>
        <location evidence="2">Chloroplast thylakoid membrane</location>
        <topology evidence="2">Peripheral membrane protein</topology>
        <orientation evidence="2">Stromal side</orientation>
    </subcellularLocation>
</comment>
<geneLocation type="chloroplast"/>
<name>PSAC_PSINU</name>
<gene>
    <name evidence="2" type="primary">psaC</name>
</gene>
<sequence>MAHSVKIYDTCIGCTQCVRACPTDVLEMIPWNGCKANQIASAPRTEDCVGCKRCESACPTDFLSVRVYLGSETTRSMGLAY</sequence>
<reference key="1">
    <citation type="journal article" date="2004" name="Mol. Biol. Evol.">
        <title>Chloroplast phylogeny indicates that bryophytes are monophyletic.</title>
        <authorList>
            <person name="Nishiyama T."/>
            <person name="Wolf P.G."/>
            <person name="Kugita M."/>
            <person name="Sinclair R.B."/>
            <person name="Sugita M."/>
            <person name="Sugiura C."/>
            <person name="Wakasugi T."/>
            <person name="Yamada K."/>
            <person name="Yoshinaga K."/>
            <person name="Yamaguchi K."/>
            <person name="Ueda K."/>
            <person name="Hasebe M."/>
        </authorList>
    </citation>
    <scope>NUCLEOTIDE SEQUENCE [LARGE SCALE GENOMIC DNA]</scope>
    <source>
        <strain>Kingyoku</strain>
    </source>
</reference>
<organism>
    <name type="scientific">Psilotum nudum</name>
    <name type="common">Whisk fern</name>
    <name type="synonym">Lycopodium nudum</name>
    <dbReference type="NCBI Taxonomy" id="3240"/>
    <lineage>
        <taxon>Eukaryota</taxon>
        <taxon>Viridiplantae</taxon>
        <taxon>Streptophyta</taxon>
        <taxon>Embryophyta</taxon>
        <taxon>Tracheophyta</taxon>
        <taxon>Polypodiopsida</taxon>
        <taxon>Ophioglossidae</taxon>
        <taxon>Psilotales</taxon>
        <taxon>Psilotaceae</taxon>
        <taxon>Psilotum</taxon>
    </lineage>
</organism>
<proteinExistence type="inferred from homology"/>
<keyword id="KW-0004">4Fe-4S</keyword>
<keyword id="KW-0150">Chloroplast</keyword>
<keyword id="KW-0249">Electron transport</keyword>
<keyword id="KW-0408">Iron</keyword>
<keyword id="KW-0411">Iron-sulfur</keyword>
<keyword id="KW-0472">Membrane</keyword>
<keyword id="KW-0479">Metal-binding</keyword>
<keyword id="KW-0560">Oxidoreductase</keyword>
<keyword id="KW-0602">Photosynthesis</keyword>
<keyword id="KW-0603">Photosystem I</keyword>
<keyword id="KW-0934">Plastid</keyword>
<keyword id="KW-0677">Repeat</keyword>
<keyword id="KW-0793">Thylakoid</keyword>
<keyword id="KW-0813">Transport</keyword>